<name>THNS1_PONAB</name>
<dbReference type="EMBL" id="CR860814">
    <property type="protein sequence ID" value="CAH92923.1"/>
    <property type="molecule type" value="mRNA"/>
</dbReference>
<dbReference type="RefSeq" id="NP_001126720.1">
    <property type="nucleotide sequence ID" value="NM_001133248.1"/>
</dbReference>
<dbReference type="SMR" id="Q5R5P3"/>
<dbReference type="FunCoup" id="Q5R5P3">
    <property type="interactions" value="426"/>
</dbReference>
<dbReference type="STRING" id="9601.ENSPPYP00000003283"/>
<dbReference type="GeneID" id="100173721"/>
<dbReference type="KEGG" id="pon:100173721"/>
<dbReference type="CTD" id="79896"/>
<dbReference type="eggNOG" id="KOG2616">
    <property type="taxonomic scope" value="Eukaryota"/>
</dbReference>
<dbReference type="InParanoid" id="Q5R5P3"/>
<dbReference type="OrthoDB" id="5203861at2759"/>
<dbReference type="Proteomes" id="UP000001595">
    <property type="component" value="Unplaced"/>
</dbReference>
<dbReference type="GO" id="GO:0005737">
    <property type="term" value="C:cytoplasm"/>
    <property type="evidence" value="ECO:0007669"/>
    <property type="project" value="TreeGrafter"/>
</dbReference>
<dbReference type="CDD" id="cd00464">
    <property type="entry name" value="SK"/>
    <property type="match status" value="1"/>
</dbReference>
<dbReference type="CDD" id="cd01560">
    <property type="entry name" value="Thr-synth_2"/>
    <property type="match status" value="1"/>
</dbReference>
<dbReference type="Gene3D" id="3.40.50.1100">
    <property type="match status" value="2"/>
</dbReference>
<dbReference type="Gene3D" id="3.40.50.300">
    <property type="entry name" value="P-loop containing nucleotide triphosphate hydrolases"/>
    <property type="match status" value="1"/>
</dbReference>
<dbReference type="Gene3D" id="3.90.1380.10">
    <property type="entry name" value="Threonine synthase, N-terminal domain"/>
    <property type="match status" value="1"/>
</dbReference>
<dbReference type="HAMAP" id="MF_00109">
    <property type="entry name" value="Shikimate_kinase"/>
    <property type="match status" value="1"/>
</dbReference>
<dbReference type="InterPro" id="IPR027417">
    <property type="entry name" value="P-loop_NTPase"/>
</dbReference>
<dbReference type="InterPro" id="IPR031322">
    <property type="entry name" value="Shikimate/glucono_kinase"/>
</dbReference>
<dbReference type="InterPro" id="IPR000623">
    <property type="entry name" value="Shikimate_kinase/TSH1"/>
</dbReference>
<dbReference type="InterPro" id="IPR029144">
    <property type="entry name" value="Thr_synth_N"/>
</dbReference>
<dbReference type="InterPro" id="IPR037158">
    <property type="entry name" value="Thr_synth_N_sf"/>
</dbReference>
<dbReference type="InterPro" id="IPR004450">
    <property type="entry name" value="Thr_synthase-like"/>
</dbReference>
<dbReference type="InterPro" id="IPR036052">
    <property type="entry name" value="TrpB-like_PALP_sf"/>
</dbReference>
<dbReference type="NCBIfam" id="TIGR00260">
    <property type="entry name" value="thrC"/>
    <property type="match status" value="1"/>
</dbReference>
<dbReference type="PANTHER" id="PTHR43515">
    <property type="entry name" value="THREONINE SYNTHASE-LIKE 1"/>
    <property type="match status" value="1"/>
</dbReference>
<dbReference type="PANTHER" id="PTHR43515:SF1">
    <property type="entry name" value="THREONINE SYNTHASE-LIKE 1"/>
    <property type="match status" value="1"/>
</dbReference>
<dbReference type="Pfam" id="PF01202">
    <property type="entry name" value="SKI"/>
    <property type="match status" value="1"/>
</dbReference>
<dbReference type="Pfam" id="PF14821">
    <property type="entry name" value="Thr_synth_N"/>
    <property type="match status" value="1"/>
</dbReference>
<dbReference type="PRINTS" id="PR01100">
    <property type="entry name" value="SHIKIMTKNASE"/>
</dbReference>
<dbReference type="SUPFAM" id="SSF52540">
    <property type="entry name" value="P-loop containing nucleoside triphosphate hydrolases"/>
    <property type="match status" value="1"/>
</dbReference>
<dbReference type="SUPFAM" id="SSF53686">
    <property type="entry name" value="Tryptophan synthase beta subunit-like PLP-dependent enzymes"/>
    <property type="match status" value="1"/>
</dbReference>
<comment type="cofactor">
    <cofactor evidence="1">
        <name>pyridoxal 5'-phosphate</name>
        <dbReference type="ChEBI" id="CHEBI:597326"/>
    </cofactor>
</comment>
<comment type="similarity">
    <text evidence="3">Belongs to the threonine synthase family.</text>
</comment>
<protein>
    <recommendedName>
        <fullName>Threonine synthase-like 1</fullName>
        <shortName>TSH1</shortName>
    </recommendedName>
</protein>
<accession>Q5R5P3</accession>
<proteinExistence type="evidence at transcript level"/>
<sequence length="743" mass="83004">MLHFNRCHHLKKITQKCFSSIHVKTDKHAQQFLSRTFALAELRKSWYSTHSLVGDKNIILMGPPGAGKTTVGRIIGQKLGCCVIDVDDDILEKTWNMSVSEKLQDVGNEQFLEEEGKAVLNFSASGSVISLTGSNPMHDASMWHLKKNGIIVYLDVPLLDLIHRLKLMKTDRIVGQNSGTSVKDLLKFRRQYYKKWYDARVFCESGASPEEVADKVLNAIKRYQDVDSETFISTRHVWPKDGEQKLSAKFFSEAVIEGLASDGGLFVPAKEFPKLSCGEWKSLVGATYIERAQILLERCIHPADIPAARLGEMIETAYGENFACSKIAPVRHLSGNQFILELFHGPTGSFKDLSLQLMPHIFAHCIPPSCNYVILVATSGDTGSAVLNGFSRLNKNDKQRIAVVAFFPENGVSDFQKAQIIGSQRENGWAVGVESDFDFCQTAIKRIFDDSDFTGFLTVEYGTILSSANSINWGRLLPQVVYHASAYLDLISQGFISFGSPVDVCIPTGNFGNILAAVYAKMMGIPIRKFICASNQNHVLTDFIKTGHYDLRERKLAQTFSPSIDILKSSNLERHLHLMANKDGQLMTELFNRLESQHHFQIEKALVEKLQQDFIADWCSEGECLAAINSTYNTSGYILDPHTAVAKVVADRVQDKSCPLIISSTAHYSKFAPAIMQALKIKEINETSSSQLYLLGSYNALPPLHEALLERTKQQEKMEYQVCAADVNVLKSHVEKLIQNQFI</sequence>
<keyword id="KW-0007">Acetylation</keyword>
<keyword id="KW-0663">Pyridoxal phosphate</keyword>
<keyword id="KW-1185">Reference proteome</keyword>
<evidence type="ECO:0000250" key="1"/>
<evidence type="ECO:0000250" key="2">
    <source>
        <dbReference type="UniProtKB" id="Q8IYQ7"/>
    </source>
</evidence>
<evidence type="ECO:0000305" key="3"/>
<reference key="1">
    <citation type="submission" date="2004-11" db="EMBL/GenBank/DDBJ databases">
        <authorList>
            <consortium name="The German cDNA consortium"/>
        </authorList>
    </citation>
    <scope>NUCLEOTIDE SEQUENCE [LARGE SCALE MRNA]</scope>
    <source>
        <tissue>Kidney</tissue>
    </source>
</reference>
<gene>
    <name type="primary">THNSL1</name>
</gene>
<feature type="chain" id="PRO_0000185649" description="Threonine synthase-like 1">
    <location>
        <begin position="1"/>
        <end position="743"/>
    </location>
</feature>
<feature type="modified residue" description="N6-acetyllysine" evidence="2">
    <location>
        <position position="281"/>
    </location>
</feature>
<feature type="modified residue" description="N6-(pyridoxal phosphate)lysine" evidence="1">
    <location>
        <position position="351"/>
    </location>
</feature>
<organism>
    <name type="scientific">Pongo abelii</name>
    <name type="common">Sumatran orangutan</name>
    <name type="synonym">Pongo pygmaeus abelii</name>
    <dbReference type="NCBI Taxonomy" id="9601"/>
    <lineage>
        <taxon>Eukaryota</taxon>
        <taxon>Metazoa</taxon>
        <taxon>Chordata</taxon>
        <taxon>Craniata</taxon>
        <taxon>Vertebrata</taxon>
        <taxon>Euteleostomi</taxon>
        <taxon>Mammalia</taxon>
        <taxon>Eutheria</taxon>
        <taxon>Euarchontoglires</taxon>
        <taxon>Primates</taxon>
        <taxon>Haplorrhini</taxon>
        <taxon>Catarrhini</taxon>
        <taxon>Hominidae</taxon>
        <taxon>Pongo</taxon>
    </lineage>
</organism>